<proteinExistence type="inferred from homology"/>
<evidence type="ECO:0000255" key="1">
    <source>
        <dbReference type="HAMAP-Rule" id="MF_01694"/>
    </source>
</evidence>
<evidence type="ECO:0000255" key="2">
    <source>
        <dbReference type="PROSITE-ProRule" id="PRU01266"/>
    </source>
</evidence>
<name>BIOB_ECO57</name>
<keyword id="KW-0001">2Fe-2S</keyword>
<keyword id="KW-0004">4Fe-4S</keyword>
<keyword id="KW-0093">Biotin biosynthesis</keyword>
<keyword id="KW-0408">Iron</keyword>
<keyword id="KW-0411">Iron-sulfur</keyword>
<keyword id="KW-0479">Metal-binding</keyword>
<keyword id="KW-1185">Reference proteome</keyword>
<keyword id="KW-0949">S-adenosyl-L-methionine</keyword>
<keyword id="KW-0808">Transferase</keyword>
<accession>Q8X825</accession>
<accession>Q7AGD7</accession>
<organism>
    <name type="scientific">Escherichia coli O157:H7</name>
    <dbReference type="NCBI Taxonomy" id="83334"/>
    <lineage>
        <taxon>Bacteria</taxon>
        <taxon>Pseudomonadati</taxon>
        <taxon>Pseudomonadota</taxon>
        <taxon>Gammaproteobacteria</taxon>
        <taxon>Enterobacterales</taxon>
        <taxon>Enterobacteriaceae</taxon>
        <taxon>Escherichia</taxon>
    </lineage>
</organism>
<protein>
    <recommendedName>
        <fullName evidence="1">Biotin synthase</fullName>
        <ecNumber evidence="1">2.8.1.6</ecNumber>
    </recommendedName>
</protein>
<comment type="function">
    <text evidence="1">Catalyzes the conversion of dethiobiotin (DTB) to biotin by the insertion of a sulfur atom into dethiobiotin via a radical-based mechanism.</text>
</comment>
<comment type="catalytic activity">
    <reaction evidence="1">
        <text>(4R,5S)-dethiobiotin + (sulfur carrier)-SH + 2 reduced [2Fe-2S]-[ferredoxin] + 2 S-adenosyl-L-methionine = (sulfur carrier)-H + biotin + 2 5'-deoxyadenosine + 2 L-methionine + 2 oxidized [2Fe-2S]-[ferredoxin]</text>
        <dbReference type="Rhea" id="RHEA:22060"/>
        <dbReference type="Rhea" id="RHEA-COMP:10000"/>
        <dbReference type="Rhea" id="RHEA-COMP:10001"/>
        <dbReference type="Rhea" id="RHEA-COMP:14737"/>
        <dbReference type="Rhea" id="RHEA-COMP:14739"/>
        <dbReference type="ChEBI" id="CHEBI:17319"/>
        <dbReference type="ChEBI" id="CHEBI:29917"/>
        <dbReference type="ChEBI" id="CHEBI:33737"/>
        <dbReference type="ChEBI" id="CHEBI:33738"/>
        <dbReference type="ChEBI" id="CHEBI:57586"/>
        <dbReference type="ChEBI" id="CHEBI:57844"/>
        <dbReference type="ChEBI" id="CHEBI:59789"/>
        <dbReference type="ChEBI" id="CHEBI:64428"/>
        <dbReference type="ChEBI" id="CHEBI:149473"/>
        <dbReference type="EC" id="2.8.1.6"/>
    </reaction>
</comment>
<comment type="cofactor">
    <cofactor evidence="1">
        <name>[4Fe-4S] cluster</name>
        <dbReference type="ChEBI" id="CHEBI:49883"/>
    </cofactor>
    <text evidence="1">Binds 1 [4Fe-4S] cluster. The cluster is coordinated with 3 cysteines and an exchangeable S-adenosyl-L-methionine.</text>
</comment>
<comment type="cofactor">
    <cofactor evidence="1">
        <name>[2Fe-2S] cluster</name>
        <dbReference type="ChEBI" id="CHEBI:190135"/>
    </cofactor>
    <text evidence="1">Binds 1 [2Fe-2S] cluster. The cluster is coordinated with 3 cysteines and 1 arginine.</text>
</comment>
<comment type="pathway">
    <text evidence="1">Cofactor biosynthesis; biotin biosynthesis; biotin from 7,8-diaminononanoate: step 2/2.</text>
</comment>
<comment type="subunit">
    <text evidence="1">Homodimer.</text>
</comment>
<comment type="similarity">
    <text evidence="1">Belongs to the radical SAM superfamily. Biotin synthase family.</text>
</comment>
<dbReference type="EC" id="2.8.1.6" evidence="1"/>
<dbReference type="EMBL" id="AE005174">
    <property type="protein sequence ID" value="AAG55146.1"/>
    <property type="molecule type" value="Genomic_DNA"/>
</dbReference>
<dbReference type="EMBL" id="BA000007">
    <property type="protein sequence ID" value="BAB34276.1"/>
    <property type="molecule type" value="Genomic_DNA"/>
</dbReference>
<dbReference type="PIR" id="E90735">
    <property type="entry name" value="E90735"/>
</dbReference>
<dbReference type="PIR" id="F85585">
    <property type="entry name" value="F85585"/>
</dbReference>
<dbReference type="RefSeq" id="NP_308880.1">
    <property type="nucleotide sequence ID" value="NC_002695.1"/>
</dbReference>
<dbReference type="RefSeq" id="WP_000951221.1">
    <property type="nucleotide sequence ID" value="NZ_VOAI01000006.1"/>
</dbReference>
<dbReference type="SMR" id="Q8X825"/>
<dbReference type="STRING" id="155864.Z0994"/>
<dbReference type="GeneID" id="917589"/>
<dbReference type="KEGG" id="ece:Z0994"/>
<dbReference type="KEGG" id="ecs:ECs_0853"/>
<dbReference type="PATRIC" id="fig|386585.9.peg.967"/>
<dbReference type="eggNOG" id="COG0502">
    <property type="taxonomic scope" value="Bacteria"/>
</dbReference>
<dbReference type="HOGENOM" id="CLU_033172_1_2_6"/>
<dbReference type="OMA" id="NICTTHT"/>
<dbReference type="UniPathway" id="UPA00078">
    <property type="reaction ID" value="UER00162"/>
</dbReference>
<dbReference type="Proteomes" id="UP000000558">
    <property type="component" value="Chromosome"/>
</dbReference>
<dbReference type="Proteomes" id="UP000002519">
    <property type="component" value="Chromosome"/>
</dbReference>
<dbReference type="GO" id="GO:0051537">
    <property type="term" value="F:2 iron, 2 sulfur cluster binding"/>
    <property type="evidence" value="ECO:0007669"/>
    <property type="project" value="UniProtKB-KW"/>
</dbReference>
<dbReference type="GO" id="GO:0051539">
    <property type="term" value="F:4 iron, 4 sulfur cluster binding"/>
    <property type="evidence" value="ECO:0007669"/>
    <property type="project" value="UniProtKB-KW"/>
</dbReference>
<dbReference type="GO" id="GO:0004076">
    <property type="term" value="F:biotin synthase activity"/>
    <property type="evidence" value="ECO:0007669"/>
    <property type="project" value="UniProtKB-UniRule"/>
</dbReference>
<dbReference type="GO" id="GO:0005506">
    <property type="term" value="F:iron ion binding"/>
    <property type="evidence" value="ECO:0007669"/>
    <property type="project" value="UniProtKB-UniRule"/>
</dbReference>
<dbReference type="GO" id="GO:0009102">
    <property type="term" value="P:biotin biosynthetic process"/>
    <property type="evidence" value="ECO:0007669"/>
    <property type="project" value="UniProtKB-UniRule"/>
</dbReference>
<dbReference type="CDD" id="cd01335">
    <property type="entry name" value="Radical_SAM"/>
    <property type="match status" value="1"/>
</dbReference>
<dbReference type="FunFam" id="3.20.20.70:FF:000011">
    <property type="entry name" value="Biotin synthase"/>
    <property type="match status" value="1"/>
</dbReference>
<dbReference type="Gene3D" id="3.20.20.70">
    <property type="entry name" value="Aldolase class I"/>
    <property type="match status" value="1"/>
</dbReference>
<dbReference type="HAMAP" id="MF_01694">
    <property type="entry name" value="BioB"/>
    <property type="match status" value="1"/>
</dbReference>
<dbReference type="InterPro" id="IPR013785">
    <property type="entry name" value="Aldolase_TIM"/>
</dbReference>
<dbReference type="InterPro" id="IPR010722">
    <property type="entry name" value="BATS_dom"/>
</dbReference>
<dbReference type="InterPro" id="IPR002684">
    <property type="entry name" value="Biotin_synth/BioAB"/>
</dbReference>
<dbReference type="InterPro" id="IPR024177">
    <property type="entry name" value="Biotin_synthase"/>
</dbReference>
<dbReference type="InterPro" id="IPR006638">
    <property type="entry name" value="Elp3/MiaA/NifB-like_rSAM"/>
</dbReference>
<dbReference type="InterPro" id="IPR007197">
    <property type="entry name" value="rSAM"/>
</dbReference>
<dbReference type="NCBIfam" id="TIGR00433">
    <property type="entry name" value="bioB"/>
    <property type="match status" value="1"/>
</dbReference>
<dbReference type="PANTHER" id="PTHR22976">
    <property type="entry name" value="BIOTIN SYNTHASE"/>
    <property type="match status" value="1"/>
</dbReference>
<dbReference type="PANTHER" id="PTHR22976:SF2">
    <property type="entry name" value="BIOTIN SYNTHASE, MITOCHONDRIAL"/>
    <property type="match status" value="1"/>
</dbReference>
<dbReference type="Pfam" id="PF06968">
    <property type="entry name" value="BATS"/>
    <property type="match status" value="1"/>
</dbReference>
<dbReference type="Pfam" id="PF04055">
    <property type="entry name" value="Radical_SAM"/>
    <property type="match status" value="1"/>
</dbReference>
<dbReference type="PIRSF" id="PIRSF001619">
    <property type="entry name" value="Biotin_synth"/>
    <property type="match status" value="1"/>
</dbReference>
<dbReference type="SFLD" id="SFLDF00272">
    <property type="entry name" value="biotin_synthase"/>
    <property type="match status" value="1"/>
</dbReference>
<dbReference type="SFLD" id="SFLDS00029">
    <property type="entry name" value="Radical_SAM"/>
    <property type="match status" value="1"/>
</dbReference>
<dbReference type="SMART" id="SM00876">
    <property type="entry name" value="BATS"/>
    <property type="match status" value="1"/>
</dbReference>
<dbReference type="SMART" id="SM00729">
    <property type="entry name" value="Elp3"/>
    <property type="match status" value="1"/>
</dbReference>
<dbReference type="SUPFAM" id="SSF102114">
    <property type="entry name" value="Radical SAM enzymes"/>
    <property type="match status" value="1"/>
</dbReference>
<dbReference type="PROSITE" id="PS51918">
    <property type="entry name" value="RADICAL_SAM"/>
    <property type="match status" value="1"/>
</dbReference>
<gene>
    <name evidence="1" type="primary">bioB</name>
    <name type="ordered locus">Z0994</name>
    <name type="ordered locus">ECs0853</name>
</gene>
<sequence>MAHRPRWTLSQVTELFEKPLLDLLFEAQQVHRQHFDPRQVQVSTLLSIKTGACPEDCKYCPQSSRYKTGLEAERLMEVEQVLESARKAKAAGSTRFCMGAAWKNPHERDMSYLEQMVQGVKAMGLEACMTLGTLSESQAQRLANAGLDYYNHNLDTSPEFYGNIITTRTYQERLDTLEKVRDAGIKVCSGGIVGLGETVKDRAGLLLQLANLPTPPESVPINMLVKVKGTPLADNDDVDAFDFIRTIAVARIMMPTSYVRLSAGREQMNEQTQAMCFMAGANSIFYGCKLLTTPNPEEDKDLQLFRKLGLNPQQTAVLAGDNEQQQRLEQALMTPDTDEYYNAAAL</sequence>
<reference key="1">
    <citation type="journal article" date="2001" name="Nature">
        <title>Genome sequence of enterohaemorrhagic Escherichia coli O157:H7.</title>
        <authorList>
            <person name="Perna N.T."/>
            <person name="Plunkett G. III"/>
            <person name="Burland V."/>
            <person name="Mau B."/>
            <person name="Glasner J.D."/>
            <person name="Rose D.J."/>
            <person name="Mayhew G.F."/>
            <person name="Evans P.S."/>
            <person name="Gregor J."/>
            <person name="Kirkpatrick H.A."/>
            <person name="Posfai G."/>
            <person name="Hackett J."/>
            <person name="Klink S."/>
            <person name="Boutin A."/>
            <person name="Shao Y."/>
            <person name="Miller L."/>
            <person name="Grotbeck E.J."/>
            <person name="Davis N.W."/>
            <person name="Lim A."/>
            <person name="Dimalanta E.T."/>
            <person name="Potamousis K."/>
            <person name="Apodaca J."/>
            <person name="Anantharaman T.S."/>
            <person name="Lin J."/>
            <person name="Yen G."/>
            <person name="Schwartz D.C."/>
            <person name="Welch R.A."/>
            <person name="Blattner F.R."/>
        </authorList>
    </citation>
    <scope>NUCLEOTIDE SEQUENCE [LARGE SCALE GENOMIC DNA]</scope>
    <source>
        <strain>O157:H7 / EDL933 / ATCC 700927 / EHEC</strain>
    </source>
</reference>
<reference key="2">
    <citation type="journal article" date="2001" name="DNA Res.">
        <title>Complete genome sequence of enterohemorrhagic Escherichia coli O157:H7 and genomic comparison with a laboratory strain K-12.</title>
        <authorList>
            <person name="Hayashi T."/>
            <person name="Makino K."/>
            <person name="Ohnishi M."/>
            <person name="Kurokawa K."/>
            <person name="Ishii K."/>
            <person name="Yokoyama K."/>
            <person name="Han C.-G."/>
            <person name="Ohtsubo E."/>
            <person name="Nakayama K."/>
            <person name="Murata T."/>
            <person name="Tanaka M."/>
            <person name="Tobe T."/>
            <person name="Iida T."/>
            <person name="Takami H."/>
            <person name="Honda T."/>
            <person name="Sasakawa C."/>
            <person name="Ogasawara N."/>
            <person name="Yasunaga T."/>
            <person name="Kuhara S."/>
            <person name="Shiba T."/>
            <person name="Hattori M."/>
            <person name="Shinagawa H."/>
        </authorList>
    </citation>
    <scope>NUCLEOTIDE SEQUENCE [LARGE SCALE GENOMIC DNA]</scope>
    <source>
        <strain>O157:H7 / Sakai / RIMD 0509952 / EHEC</strain>
    </source>
</reference>
<feature type="chain" id="PRO_0000381359" description="Biotin synthase">
    <location>
        <begin position="1"/>
        <end position="346"/>
    </location>
</feature>
<feature type="domain" description="Radical SAM core" evidence="2">
    <location>
        <begin position="38"/>
        <end position="256"/>
    </location>
</feature>
<feature type="binding site" evidence="1">
    <location>
        <position position="53"/>
    </location>
    <ligand>
        <name>[4Fe-4S] cluster</name>
        <dbReference type="ChEBI" id="CHEBI:49883"/>
        <note>4Fe-4S-S-AdoMet</note>
    </ligand>
</feature>
<feature type="binding site" evidence="1">
    <location>
        <position position="57"/>
    </location>
    <ligand>
        <name>[4Fe-4S] cluster</name>
        <dbReference type="ChEBI" id="CHEBI:49883"/>
        <note>4Fe-4S-S-AdoMet</note>
    </ligand>
</feature>
<feature type="binding site" evidence="1">
    <location>
        <position position="60"/>
    </location>
    <ligand>
        <name>[4Fe-4S] cluster</name>
        <dbReference type="ChEBI" id="CHEBI:49883"/>
        <note>4Fe-4S-S-AdoMet</note>
    </ligand>
</feature>
<feature type="binding site" evidence="1">
    <location>
        <position position="97"/>
    </location>
    <ligand>
        <name>[2Fe-2S] cluster</name>
        <dbReference type="ChEBI" id="CHEBI:190135"/>
    </ligand>
</feature>
<feature type="binding site" evidence="1">
    <location>
        <position position="128"/>
    </location>
    <ligand>
        <name>[2Fe-2S] cluster</name>
        <dbReference type="ChEBI" id="CHEBI:190135"/>
    </ligand>
</feature>
<feature type="binding site" evidence="1">
    <location>
        <position position="188"/>
    </location>
    <ligand>
        <name>[2Fe-2S] cluster</name>
        <dbReference type="ChEBI" id="CHEBI:190135"/>
    </ligand>
</feature>
<feature type="binding site" evidence="1">
    <location>
        <position position="260"/>
    </location>
    <ligand>
        <name>[2Fe-2S] cluster</name>
        <dbReference type="ChEBI" id="CHEBI:190135"/>
    </ligand>
</feature>